<organism>
    <name type="scientific">Herminiimonas arsenicoxydans</name>
    <dbReference type="NCBI Taxonomy" id="204773"/>
    <lineage>
        <taxon>Bacteria</taxon>
        <taxon>Pseudomonadati</taxon>
        <taxon>Pseudomonadota</taxon>
        <taxon>Betaproteobacteria</taxon>
        <taxon>Burkholderiales</taxon>
        <taxon>Oxalobacteraceae</taxon>
        <taxon>Herminiimonas</taxon>
    </lineage>
</organism>
<comment type="function">
    <text evidence="1">Attaches a formyl group to the free amino group of methionyl-tRNA(fMet). The formyl group appears to play a dual role in the initiator identity of N-formylmethionyl-tRNA by promoting its recognition by IF2 and preventing the misappropriation of this tRNA by the elongation apparatus.</text>
</comment>
<comment type="catalytic activity">
    <reaction evidence="1">
        <text>L-methionyl-tRNA(fMet) + (6R)-10-formyltetrahydrofolate = N-formyl-L-methionyl-tRNA(fMet) + (6S)-5,6,7,8-tetrahydrofolate + H(+)</text>
        <dbReference type="Rhea" id="RHEA:24380"/>
        <dbReference type="Rhea" id="RHEA-COMP:9952"/>
        <dbReference type="Rhea" id="RHEA-COMP:9953"/>
        <dbReference type="ChEBI" id="CHEBI:15378"/>
        <dbReference type="ChEBI" id="CHEBI:57453"/>
        <dbReference type="ChEBI" id="CHEBI:78530"/>
        <dbReference type="ChEBI" id="CHEBI:78844"/>
        <dbReference type="ChEBI" id="CHEBI:195366"/>
        <dbReference type="EC" id="2.1.2.9"/>
    </reaction>
</comment>
<comment type="similarity">
    <text evidence="1">Belongs to the Fmt family.</text>
</comment>
<name>FMT_HERAR</name>
<evidence type="ECO:0000255" key="1">
    <source>
        <dbReference type="HAMAP-Rule" id="MF_00182"/>
    </source>
</evidence>
<sequence>MKIIFAGTPEFAAVALAALHAAGFEIPLVLTQPDRPAGRGMQLQASAVKQFALAHKIPVAQPISLRLDGKYPDVAQEAHDLLRATPHDVMVVAAYGLILPQSVLDIPPLGCLNIHASLLPRWRGAAPIHRAIEVGDEKTGITIMQMELGLDTGPMLLMESLPIAADDTTASLHDKLARLGGEMIVEALLKLEKGELTATPQPEAGANYAAKIAKEEATLDLRQSAQELARKIRAFNPFPGAMGICNGTPVKFWQAQALECSNQWPAGQVISANAQDGVVIACGDGALRVTELQKPGGKRLPAAEFIKGFALEAQRFQ</sequence>
<dbReference type="EC" id="2.1.2.9" evidence="1"/>
<dbReference type="EMBL" id="CU207211">
    <property type="protein sequence ID" value="CAL60355.1"/>
    <property type="molecule type" value="Genomic_DNA"/>
</dbReference>
<dbReference type="SMR" id="A4G1G8"/>
<dbReference type="STRING" id="204773.HEAR0119"/>
<dbReference type="KEGG" id="har:HEAR0119"/>
<dbReference type="eggNOG" id="COG0223">
    <property type="taxonomic scope" value="Bacteria"/>
</dbReference>
<dbReference type="HOGENOM" id="CLU_033347_1_2_4"/>
<dbReference type="OrthoDB" id="9802815at2"/>
<dbReference type="Proteomes" id="UP000006697">
    <property type="component" value="Chromosome"/>
</dbReference>
<dbReference type="GO" id="GO:0005829">
    <property type="term" value="C:cytosol"/>
    <property type="evidence" value="ECO:0007669"/>
    <property type="project" value="TreeGrafter"/>
</dbReference>
<dbReference type="GO" id="GO:0004479">
    <property type="term" value="F:methionyl-tRNA formyltransferase activity"/>
    <property type="evidence" value="ECO:0007669"/>
    <property type="project" value="UniProtKB-UniRule"/>
</dbReference>
<dbReference type="CDD" id="cd08646">
    <property type="entry name" value="FMT_core_Met-tRNA-FMT_N"/>
    <property type="match status" value="1"/>
</dbReference>
<dbReference type="CDD" id="cd08704">
    <property type="entry name" value="Met_tRNA_FMT_C"/>
    <property type="match status" value="1"/>
</dbReference>
<dbReference type="FunFam" id="3.40.50.12230:FF:000001">
    <property type="entry name" value="Methionyl-tRNA formyltransferase"/>
    <property type="match status" value="1"/>
</dbReference>
<dbReference type="Gene3D" id="3.40.50.12230">
    <property type="match status" value="1"/>
</dbReference>
<dbReference type="HAMAP" id="MF_00182">
    <property type="entry name" value="Formyl_trans"/>
    <property type="match status" value="1"/>
</dbReference>
<dbReference type="InterPro" id="IPR005794">
    <property type="entry name" value="Fmt"/>
</dbReference>
<dbReference type="InterPro" id="IPR005793">
    <property type="entry name" value="Formyl_trans_C"/>
</dbReference>
<dbReference type="InterPro" id="IPR002376">
    <property type="entry name" value="Formyl_transf_N"/>
</dbReference>
<dbReference type="InterPro" id="IPR036477">
    <property type="entry name" value="Formyl_transf_N_sf"/>
</dbReference>
<dbReference type="InterPro" id="IPR011034">
    <property type="entry name" value="Formyl_transferase-like_C_sf"/>
</dbReference>
<dbReference type="InterPro" id="IPR044135">
    <property type="entry name" value="Met-tRNA-FMT_C"/>
</dbReference>
<dbReference type="InterPro" id="IPR041711">
    <property type="entry name" value="Met-tRNA-FMT_N"/>
</dbReference>
<dbReference type="NCBIfam" id="TIGR00460">
    <property type="entry name" value="fmt"/>
    <property type="match status" value="1"/>
</dbReference>
<dbReference type="PANTHER" id="PTHR11138">
    <property type="entry name" value="METHIONYL-TRNA FORMYLTRANSFERASE"/>
    <property type="match status" value="1"/>
</dbReference>
<dbReference type="PANTHER" id="PTHR11138:SF5">
    <property type="entry name" value="METHIONYL-TRNA FORMYLTRANSFERASE, MITOCHONDRIAL"/>
    <property type="match status" value="1"/>
</dbReference>
<dbReference type="Pfam" id="PF02911">
    <property type="entry name" value="Formyl_trans_C"/>
    <property type="match status" value="1"/>
</dbReference>
<dbReference type="Pfam" id="PF00551">
    <property type="entry name" value="Formyl_trans_N"/>
    <property type="match status" value="1"/>
</dbReference>
<dbReference type="SUPFAM" id="SSF50486">
    <property type="entry name" value="FMT C-terminal domain-like"/>
    <property type="match status" value="1"/>
</dbReference>
<dbReference type="SUPFAM" id="SSF53328">
    <property type="entry name" value="Formyltransferase"/>
    <property type="match status" value="1"/>
</dbReference>
<feature type="chain" id="PRO_1000020079" description="Methionyl-tRNA formyltransferase">
    <location>
        <begin position="1"/>
        <end position="317"/>
    </location>
</feature>
<feature type="binding site" evidence="1">
    <location>
        <begin position="117"/>
        <end position="120"/>
    </location>
    <ligand>
        <name>(6S)-5,6,7,8-tetrahydrofolate</name>
        <dbReference type="ChEBI" id="CHEBI:57453"/>
    </ligand>
</feature>
<reference key="1">
    <citation type="journal article" date="2007" name="PLoS Genet.">
        <title>A tale of two oxidation states: bacterial colonization of arsenic-rich environments.</title>
        <authorList>
            <person name="Muller D."/>
            <person name="Medigue C."/>
            <person name="Koechler S."/>
            <person name="Barbe V."/>
            <person name="Barakat M."/>
            <person name="Talla E."/>
            <person name="Bonnefoy V."/>
            <person name="Krin E."/>
            <person name="Arsene-Ploetze F."/>
            <person name="Carapito C."/>
            <person name="Chandler M."/>
            <person name="Cournoyer B."/>
            <person name="Cruveiller S."/>
            <person name="Dossat C."/>
            <person name="Duval S."/>
            <person name="Heymann M."/>
            <person name="Leize E."/>
            <person name="Lieutaud A."/>
            <person name="Lievremont D."/>
            <person name="Makita Y."/>
            <person name="Mangenot S."/>
            <person name="Nitschke W."/>
            <person name="Ortet P."/>
            <person name="Perdrial N."/>
            <person name="Schoepp B."/>
            <person name="Siguier P."/>
            <person name="Simeonova D.D."/>
            <person name="Rouy Z."/>
            <person name="Segurens B."/>
            <person name="Turlin E."/>
            <person name="Vallenet D."/>
            <person name="van Dorsselaer A."/>
            <person name="Weiss S."/>
            <person name="Weissenbach J."/>
            <person name="Lett M.-C."/>
            <person name="Danchin A."/>
            <person name="Bertin P.N."/>
        </authorList>
    </citation>
    <scope>NUCLEOTIDE SEQUENCE [LARGE SCALE GENOMIC DNA]</scope>
    <source>
        <strain>ULPAs1</strain>
    </source>
</reference>
<proteinExistence type="inferred from homology"/>
<protein>
    <recommendedName>
        <fullName evidence="1">Methionyl-tRNA formyltransferase</fullName>
        <ecNumber evidence="1">2.1.2.9</ecNumber>
    </recommendedName>
</protein>
<gene>
    <name evidence="1" type="primary">fmt</name>
    <name type="ordered locus">HEAR0119</name>
</gene>
<accession>A4G1G8</accession>
<keyword id="KW-0648">Protein biosynthesis</keyword>
<keyword id="KW-1185">Reference proteome</keyword>
<keyword id="KW-0808">Transferase</keyword>